<gene>
    <name type="primary">ADH2</name>
    <name evidence="8" type="ORF">EHI_160940</name>
</gene>
<organism evidence="8">
    <name type="scientific">Entamoeba histolytica (strain ATCC 30459 / HM-1:IMSS / ABRM)</name>
    <dbReference type="NCBI Taxonomy" id="294381"/>
    <lineage>
        <taxon>Eukaryota</taxon>
        <taxon>Amoebozoa</taxon>
        <taxon>Evosea</taxon>
        <taxon>Archamoebae</taxon>
        <taxon>Mastigamoebida</taxon>
        <taxon>Entamoebidae</taxon>
        <taxon>Entamoeba</taxon>
    </lineage>
</organism>
<keyword id="KW-0903">Direct protein sequencing</keyword>
<keyword id="KW-0408">Iron</keyword>
<keyword id="KW-0511">Multifunctional enzyme</keyword>
<keyword id="KW-0520">NAD</keyword>
<keyword id="KW-0560">Oxidoreductase</keyword>
<keyword id="KW-1185">Reference proteome</keyword>
<protein>
    <recommendedName>
        <fullName evidence="7">Aldehyde-alcohol dehydrogenase 2</fullName>
    </recommendedName>
    <domain>
        <recommendedName>
            <fullName evidence="5 6">Alcohol dehydrogenase</fullName>
            <shortName evidence="5 6">ADH</shortName>
            <ecNumber evidence="3 4">1.1.1.1</ecNumber>
        </recommendedName>
    </domain>
    <domain>
        <recommendedName>
            <fullName evidence="5 6">Acetaldehyde dehydrogenase</fullName>
            <shortName evidence="6">ACDH</shortName>
            <ecNumber evidence="3 4">1.2.1.10</ecNumber>
        </recommendedName>
    </domain>
</protein>
<accession>Q24803</accession>
<accession>A0A175JQB7</accession>
<accession>C4M2R2</accession>
<accession>Q27649</accession>
<reference key="1">
    <citation type="journal article" date="1994" name="Mol. Biochem. Parasitol.">
        <title>Entamoeba histolytica has an alcohol dehydrogenase homologous to the multifunctional adhE gene product of Escherichia coli.</title>
        <authorList>
            <person name="Yang W."/>
            <person name="Li E."/>
            <person name="Kairong T."/>
            <person name="Stanley S.L. Jr."/>
        </authorList>
    </citation>
    <scope>NUCLEOTIDE SEQUENCE [MRNA]</scope>
    <scope>PROTEIN SEQUENCE OF 377-395 AND 860-870</scope>
    <scope>FUNCTION</scope>
    <scope>CATALYTIC ACTIVITY</scope>
    <source>
        <strain>ATCC 30459 / HM-1:IMSS / ABRM</strain>
    </source>
</reference>
<reference key="2">
    <citation type="journal article" date="1994" name="Biochem. J.">
        <title>Purification and molecular characterization of the NAD(+)-dependent acetaldehyde/alcohol dehydrogenase from Entamoeba histolytica.</title>
        <authorList>
            <person name="Bruchhaus I."/>
            <person name="Tannich E."/>
        </authorList>
    </citation>
    <scope>NUCLEOTIDE SEQUENCE [MRNA]</scope>
    <scope>FUNCTION</scope>
    <scope>CATALYTIC ACTIVITY</scope>
    <scope>BIOPHYSICOCHEMICAL PROPERTIES</scope>
    <scope>SUBUNIT</scope>
    <source>
        <strain>ATCC 30459 / HM-1:IMSS / ABRM</strain>
    </source>
</reference>
<reference evidence="8" key="3">
    <citation type="journal article" date="2005" name="Nature">
        <title>The genome of the protist parasite Entamoeba histolytica.</title>
        <authorList>
            <person name="Loftus B.J."/>
            <person name="Anderson I."/>
            <person name="Davies R."/>
            <person name="Alsmark U.C."/>
            <person name="Samuelson J."/>
            <person name="Amedeo P."/>
            <person name="Roncaglia P."/>
            <person name="Berriman M."/>
            <person name="Hirt R.P."/>
            <person name="Mann B.J."/>
            <person name="Nozaki T."/>
            <person name="Suh B."/>
            <person name="Pop M."/>
            <person name="Duchene M."/>
            <person name="Ackers J."/>
            <person name="Tannich E."/>
            <person name="Leippe M."/>
            <person name="Hofer M."/>
            <person name="Bruchhaus I."/>
            <person name="Willhoeft U."/>
            <person name="Bhattacharya A."/>
            <person name="Chillingworth T."/>
            <person name="Churcher C.M."/>
            <person name="Hance Z."/>
            <person name="Harris B."/>
            <person name="Harris D."/>
            <person name="Jagels K."/>
            <person name="Moule S."/>
            <person name="Mungall K.L."/>
            <person name="Ormond D."/>
            <person name="Squares R."/>
            <person name="Whitehead S."/>
            <person name="Quail M.A."/>
            <person name="Rabbinowitsch E."/>
            <person name="Norbertczak H."/>
            <person name="Price C."/>
            <person name="Wang Z."/>
            <person name="Guillen N."/>
            <person name="Gilchrist C."/>
            <person name="Stroup S.E."/>
            <person name="Bhattacharya S."/>
            <person name="Lohia A."/>
            <person name="Foster P.G."/>
            <person name="Sicheritz-Ponten T."/>
            <person name="Weber C."/>
            <person name="Singh U."/>
            <person name="Mukherjee C."/>
            <person name="El-Sayed N.M.A."/>
            <person name="Petri W.A."/>
            <person name="Clark C.G."/>
            <person name="Embley T.M."/>
            <person name="Barrell B.G."/>
            <person name="Fraser C.M."/>
            <person name="Hall N."/>
        </authorList>
    </citation>
    <scope>NUCLEOTIDE SEQUENCE [LARGE SCALE GENOMIC DNA]</scope>
    <source>
        <strain evidence="8">ATCC 30459 / HM-1:IMSS / ABRM</strain>
    </source>
</reference>
<sequence>MSTQQTMTVDEHINQLVAKAQVALKEYLKPEYTQEKIDYIVKKASVAALDQHCALAAAAVEETGRGIFEDKATKNIFACEHVTHEMRHAKTVGIINVDPLYGITEIAEPVGVVCGVTPVTNPTSTAIFKSLISIKTRNPIVFSFHPSALKCSIMAAKIVRDAAISAGAPENCIQWIEFGGIEASNKLMNHPGVATILATGGNAMVKAAYSSGKPALGVGAGNVPTYIEKTCNIKQAANDVVMSKSFDNGMICASEQAAIIDKEIYDQVVEEMKTLGAYFINEEEKAKLEKFMFGVNAYSADVNNARLNPKCPGMSPQWFAEQVGIKVPEDCNIICAVCKEVGPNEPLTREKLSPVLAILKAENTQDGIDKAEAMVEFNGRGHSAAIHSNDKAVVEKYALTMKACRILHNTPSSQGGIGSIYNYIWPSFTLGCGSYGGNSVSANVTYHNLLNIKRLADRRNNLQWFRVPPKIFFEPHSIRYLAELKELSKIFIVSDRMMYKLGYVDRVMDVLKRRSNEVEIEIFIDVEPDPSIQTVQKGLAVMNTFGPDNIIAIGGGSAMDAAKIMWLLYEHPEADFFAMKQKFIDLRKRAFKFPTMGKKARLICIPTTSGTGSEVTPFAVISDHETGKKYPLADYSLTPSVAIVDPMFTMSLPKRAIADTGLDVLVHATEAYVSVMANEYTDGLAREAVKLVFENLLKSYNGDLEAREKMHNAATIAGMAFASAFLGMDHSMAHKVGAAFHLPHGRCVAVLLPHVIRYNGQKPRKLAMWPKYNFYKADQRYMELAQMVGLKCNTPAEGVEAFAKACEELMKATETITGFKQANIDEAAWMSKVPEMALLAFEDQCSPANPRVPMVKDMEKILKAAYYPIA</sequence>
<comment type="function">
    <text evidence="3 4">This enzyme has two NAD(+)-dependent activities: ADH and ACDH. May be a critical enzyme in the fermentative pathway.</text>
</comment>
<comment type="catalytic activity">
    <reaction evidence="3 4">
        <text>a primary alcohol + NAD(+) = an aldehyde + NADH + H(+)</text>
        <dbReference type="Rhea" id="RHEA:10736"/>
        <dbReference type="ChEBI" id="CHEBI:15378"/>
        <dbReference type="ChEBI" id="CHEBI:15734"/>
        <dbReference type="ChEBI" id="CHEBI:17478"/>
        <dbReference type="ChEBI" id="CHEBI:57540"/>
        <dbReference type="ChEBI" id="CHEBI:57945"/>
        <dbReference type="EC" id="1.1.1.1"/>
    </reaction>
</comment>
<comment type="catalytic activity">
    <reaction evidence="3 4">
        <text>a secondary alcohol + NAD(+) = a ketone + NADH + H(+)</text>
        <dbReference type="Rhea" id="RHEA:10740"/>
        <dbReference type="ChEBI" id="CHEBI:15378"/>
        <dbReference type="ChEBI" id="CHEBI:17087"/>
        <dbReference type="ChEBI" id="CHEBI:35681"/>
        <dbReference type="ChEBI" id="CHEBI:57540"/>
        <dbReference type="ChEBI" id="CHEBI:57945"/>
        <dbReference type="EC" id="1.1.1.1"/>
    </reaction>
</comment>
<comment type="catalytic activity">
    <reaction evidence="3 4">
        <text>acetaldehyde + NAD(+) + CoA = acetyl-CoA + NADH + H(+)</text>
        <dbReference type="Rhea" id="RHEA:23288"/>
        <dbReference type="ChEBI" id="CHEBI:15343"/>
        <dbReference type="ChEBI" id="CHEBI:15378"/>
        <dbReference type="ChEBI" id="CHEBI:57287"/>
        <dbReference type="ChEBI" id="CHEBI:57288"/>
        <dbReference type="ChEBI" id="CHEBI:57540"/>
        <dbReference type="ChEBI" id="CHEBI:57945"/>
        <dbReference type="EC" id="1.2.1.10"/>
    </reaction>
</comment>
<comment type="cofactor">
    <cofactor evidence="1">
        <name>Zn(2+)</name>
        <dbReference type="ChEBI" id="CHEBI:29105"/>
    </cofactor>
    <cofactor evidence="1">
        <name>Fe(2+)</name>
        <dbReference type="ChEBI" id="CHEBI:29033"/>
    </cofactor>
    <text evidence="1">Zinc or iron.</text>
</comment>
<comment type="biophysicochemical properties">
    <kinetics>
        <KM evidence="4">80 mM for ethanol</KM>
        <KM evidence="4">0.15 mM for acetaldehyde</KM>
        <KM evidence="4">0.015 mM for acetyl-CoA</KM>
        <KM evidence="4">0.15 mM for NAD(+) (for ADH activity)</KM>
        <KM evidence="4">0.05 mM for NADH (for ADH activity)</KM>
        <KM evidence="4">0.18 mM for NADH (for ACDH activity)</KM>
    </kinetics>
</comment>
<comment type="subunit">
    <text evidence="4">Seems to form a rod shaped homomer composed of at least 20 identical subunits.</text>
</comment>
<comment type="similarity">
    <text evidence="7">In the N-terminal section; belongs to the aldehyde dehydrogenase family.</text>
</comment>
<comment type="similarity">
    <text evidence="7">In the C-terminal section; belongs to the iron-containing alcohol dehydrogenase family.</text>
</comment>
<comment type="sequence caution" evidence="7">
    <conflict type="erroneous initiation">
        <sequence resource="EMBL-CDS" id="CAA54388"/>
    </conflict>
    <text>Truncated N-terminus.</text>
</comment>
<name>ADH2_ENTH1</name>
<proteinExistence type="evidence at protein level"/>
<evidence type="ECO:0000250" key="1"/>
<evidence type="ECO:0000255" key="2"/>
<evidence type="ECO:0000269" key="3">
    <source>
    </source>
</evidence>
<evidence type="ECO:0000269" key="4">
    <source>
    </source>
</evidence>
<evidence type="ECO:0000303" key="5">
    <source>
    </source>
</evidence>
<evidence type="ECO:0000303" key="6">
    <source>
    </source>
</evidence>
<evidence type="ECO:0000305" key="7"/>
<evidence type="ECO:0000312" key="8">
    <source>
        <dbReference type="EMBL" id="EAL50431.2"/>
    </source>
</evidence>
<dbReference type="EC" id="1.1.1.1" evidence="3 4"/>
<dbReference type="EC" id="1.2.1.10" evidence="3 4"/>
<dbReference type="EMBL" id="U04863">
    <property type="protein sequence ID" value="AAA81906.1"/>
    <property type="molecule type" value="mRNA"/>
</dbReference>
<dbReference type="EMBL" id="X77132">
    <property type="protein sequence ID" value="CAA54388.1"/>
    <property type="status" value="ALT_INIT"/>
    <property type="molecule type" value="mRNA"/>
</dbReference>
<dbReference type="EMBL" id="DS571228">
    <property type="protein sequence ID" value="EAL50431.2"/>
    <property type="molecule type" value="Genomic_DNA"/>
</dbReference>
<dbReference type="PIR" id="S53319">
    <property type="entry name" value="S53319"/>
</dbReference>
<dbReference type="RefSeq" id="XP_655817.2">
    <property type="nucleotide sequence ID" value="XM_650725.2"/>
</dbReference>
<dbReference type="SMR" id="Q24803"/>
<dbReference type="STRING" id="5759.C4M2R2"/>
<dbReference type="MoonProt" id="Q24803"/>
<dbReference type="EnsemblProtists" id="GAT95573">
    <property type="protein sequence ID" value="GAT95573"/>
    <property type="gene ID" value="CL6EHI_160940"/>
</dbReference>
<dbReference type="EnsemblProtists" id="rna_EHI_160940-1">
    <property type="protein sequence ID" value="rna_EHI_160940-1"/>
    <property type="gene ID" value="EHI_160940"/>
</dbReference>
<dbReference type="GeneID" id="3410145"/>
<dbReference type="KEGG" id="ehi:EHI_160940"/>
<dbReference type="VEuPathDB" id="AmoebaDB:EHI5A_157720"/>
<dbReference type="VEuPathDB" id="AmoebaDB:EHI7A_198850"/>
<dbReference type="VEuPathDB" id="AmoebaDB:EHI8A_086570"/>
<dbReference type="VEuPathDB" id="AmoebaDB:EHI_160940"/>
<dbReference type="VEuPathDB" id="AmoebaDB:KM1_283380"/>
<dbReference type="eggNOG" id="KOG3857">
    <property type="taxonomic scope" value="Eukaryota"/>
</dbReference>
<dbReference type="HOGENOM" id="CLU_007207_1_0_1"/>
<dbReference type="OMA" id="DQCTAAN"/>
<dbReference type="OrthoDB" id="31160at2759"/>
<dbReference type="Proteomes" id="UP000001926">
    <property type="component" value="Partially assembled WGS sequence"/>
</dbReference>
<dbReference type="GO" id="GO:0005739">
    <property type="term" value="C:mitochondrion"/>
    <property type="evidence" value="ECO:0000318"/>
    <property type="project" value="GO_Central"/>
</dbReference>
<dbReference type="GO" id="GO:0008774">
    <property type="term" value="F:acetaldehyde dehydrogenase (acetylating) activity"/>
    <property type="evidence" value="ECO:0000314"/>
    <property type="project" value="CAFA"/>
</dbReference>
<dbReference type="GO" id="GO:0004022">
    <property type="term" value="F:alcohol dehydrogenase (NAD+) activity"/>
    <property type="evidence" value="ECO:0000314"/>
    <property type="project" value="CAFA"/>
</dbReference>
<dbReference type="GO" id="GO:0005518">
    <property type="term" value="F:collagen binding"/>
    <property type="evidence" value="ECO:0000314"/>
    <property type="project" value="CAFA"/>
</dbReference>
<dbReference type="GO" id="GO:0001968">
    <property type="term" value="F:fibronectin binding"/>
    <property type="evidence" value="ECO:0000314"/>
    <property type="project" value="CAFA"/>
</dbReference>
<dbReference type="GO" id="GO:0043236">
    <property type="term" value="F:laminin binding"/>
    <property type="evidence" value="ECO:0000314"/>
    <property type="project" value="CAFA"/>
</dbReference>
<dbReference type="GO" id="GO:0046872">
    <property type="term" value="F:metal ion binding"/>
    <property type="evidence" value="ECO:0007669"/>
    <property type="project" value="InterPro"/>
</dbReference>
<dbReference type="GO" id="GO:0006066">
    <property type="term" value="P:alcohol metabolic process"/>
    <property type="evidence" value="ECO:0007669"/>
    <property type="project" value="InterPro"/>
</dbReference>
<dbReference type="GO" id="GO:0015976">
    <property type="term" value="P:carbon utilization"/>
    <property type="evidence" value="ECO:0007669"/>
    <property type="project" value="InterPro"/>
</dbReference>
<dbReference type="CDD" id="cd08178">
    <property type="entry name" value="AAD_C"/>
    <property type="match status" value="1"/>
</dbReference>
<dbReference type="CDD" id="cd07122">
    <property type="entry name" value="ALDH_F20_ACDH"/>
    <property type="match status" value="1"/>
</dbReference>
<dbReference type="FunFam" id="1.20.1090.10:FF:000001">
    <property type="entry name" value="Aldehyde-alcohol dehydrogenase"/>
    <property type="match status" value="1"/>
</dbReference>
<dbReference type="FunFam" id="3.40.309.10:FF:000007">
    <property type="entry name" value="Aldehyde-alcohol dehydrogenase"/>
    <property type="match status" value="1"/>
</dbReference>
<dbReference type="FunFam" id="3.40.50.1970:FF:000002">
    <property type="entry name" value="Aldehyde-alcohol dehydrogenase"/>
    <property type="match status" value="1"/>
</dbReference>
<dbReference type="Gene3D" id="3.40.50.1970">
    <property type="match status" value="1"/>
</dbReference>
<dbReference type="Gene3D" id="3.40.605.10">
    <property type="entry name" value="Aldehyde Dehydrogenase, Chain A, domain 1"/>
    <property type="match status" value="1"/>
</dbReference>
<dbReference type="Gene3D" id="3.40.309.10">
    <property type="entry name" value="Aldehyde Dehydrogenase, Chain A, domain 2"/>
    <property type="match status" value="1"/>
</dbReference>
<dbReference type="Gene3D" id="1.20.1090.10">
    <property type="entry name" value="Dehydroquinate synthase-like - alpha domain"/>
    <property type="match status" value="1"/>
</dbReference>
<dbReference type="InterPro" id="IPR034789">
    <property type="entry name" value="AAD_C"/>
</dbReference>
<dbReference type="InterPro" id="IPR001670">
    <property type="entry name" value="ADH_Fe/GldA"/>
</dbReference>
<dbReference type="InterPro" id="IPR056798">
    <property type="entry name" value="ADH_Fe_C"/>
</dbReference>
<dbReference type="InterPro" id="IPR018211">
    <property type="entry name" value="ADH_Fe_CS"/>
</dbReference>
<dbReference type="InterPro" id="IPR039697">
    <property type="entry name" value="Alcohol_dehydrogenase_Fe"/>
</dbReference>
<dbReference type="InterPro" id="IPR016161">
    <property type="entry name" value="Ald_DH/histidinol_DH"/>
</dbReference>
<dbReference type="InterPro" id="IPR016163">
    <property type="entry name" value="Ald_DH_C"/>
</dbReference>
<dbReference type="InterPro" id="IPR016162">
    <property type="entry name" value="Ald_DH_N"/>
</dbReference>
<dbReference type="InterPro" id="IPR015590">
    <property type="entry name" value="Aldehyde_DH_dom"/>
</dbReference>
<dbReference type="InterPro" id="IPR012079">
    <property type="entry name" value="Bifunc_Ald-ADH"/>
</dbReference>
<dbReference type="NCBIfam" id="NF010378">
    <property type="entry name" value="PRK13805.1"/>
    <property type="match status" value="1"/>
</dbReference>
<dbReference type="PANTHER" id="PTHR11496">
    <property type="entry name" value="ALCOHOL DEHYDROGENASE"/>
    <property type="match status" value="1"/>
</dbReference>
<dbReference type="PANTHER" id="PTHR11496:SF83">
    <property type="entry name" value="HYDROXYACID-OXOACID TRANSHYDROGENASE, MITOCHONDRIAL"/>
    <property type="match status" value="1"/>
</dbReference>
<dbReference type="Pfam" id="PF25137">
    <property type="entry name" value="ADH_Fe_C"/>
    <property type="match status" value="1"/>
</dbReference>
<dbReference type="Pfam" id="PF00171">
    <property type="entry name" value="Aldedh"/>
    <property type="match status" value="1"/>
</dbReference>
<dbReference type="Pfam" id="PF00465">
    <property type="entry name" value="Fe-ADH"/>
    <property type="match status" value="1"/>
</dbReference>
<dbReference type="PIRSF" id="PIRSF000111">
    <property type="entry name" value="ALDH_ADH"/>
    <property type="match status" value="1"/>
</dbReference>
<dbReference type="SUPFAM" id="SSF53720">
    <property type="entry name" value="ALDH-like"/>
    <property type="match status" value="1"/>
</dbReference>
<dbReference type="SUPFAM" id="SSF56796">
    <property type="entry name" value="Dehydroquinate synthase-like"/>
    <property type="match status" value="1"/>
</dbReference>
<dbReference type="PROSITE" id="PS00913">
    <property type="entry name" value="ADH_IRON_1"/>
    <property type="match status" value="1"/>
</dbReference>
<dbReference type="PROSITE" id="PS00060">
    <property type="entry name" value="ADH_IRON_2"/>
    <property type="match status" value="1"/>
</dbReference>
<feature type="chain" id="PRO_0000087835" description="Aldehyde-alcohol dehydrogenase 2">
    <location>
        <begin position="1"/>
        <end position="870"/>
    </location>
</feature>
<feature type="active site" evidence="1">
    <location>
        <position position="252"/>
    </location>
</feature>
<feature type="binding site" evidence="2">
    <location>
        <begin position="431"/>
        <end position="436"/>
    </location>
    <ligand>
        <name>NAD(+)</name>
        <dbReference type="ChEBI" id="CHEBI:57540"/>
    </ligand>
</feature>
<feature type="sequence conflict" description="In Ref. 1; AAA81906." evidence="7" ref="1">
    <original>A</original>
    <variation>R</variation>
    <location>
        <position position="18"/>
    </location>
</feature>
<feature type="sequence conflict" description="In Ref. 2; CAA54388 and 1; AAA81906." evidence="7" ref="2 1">
    <original>S</original>
    <variation>A</variation>
    <location>
        <position position="165"/>
    </location>
</feature>
<feature type="sequence conflict" description="In Ref. 1; AA sequence." evidence="7" ref="1">
    <original>R</original>
    <variation>E</variation>
    <location>
        <position position="380"/>
    </location>
</feature>
<feature type="sequence conflict" description="In Ref. 1; AA sequence." evidence="7" ref="1">
    <original>H</original>
    <variation>Q</variation>
    <location>
        <position position="382"/>
    </location>
</feature>
<feature type="sequence conflict" description="In Ref. 1; AA sequence." evidence="7" ref="1">
    <original>HS</original>
    <variation>NP</variation>
    <location>
        <begin position="387"/>
        <end position="388"/>
    </location>
</feature>
<feature type="sequence conflict" description="In Ref. 2; CAA54388." evidence="7" ref="2">
    <original>A</original>
    <variation>R</variation>
    <location>
        <position position="482"/>
    </location>
</feature>
<feature type="sequence conflict" description="In Ref. 2; CAA54388." evidence="7" ref="2">
    <original>T</original>
    <variation>I</variation>
    <location>
        <position position="534"/>
    </location>
</feature>
<feature type="sequence conflict" description="In Ref. 2; CAA54388." evidence="7" ref="2">
    <original>W</original>
    <variation>R</variation>
    <location>
        <position position="566"/>
    </location>
</feature>
<feature type="sequence conflict" description="In Ref. 2; CAA54388." evidence="7" ref="2">
    <original>A</original>
    <variation>G</variation>
    <location>
        <position position="739"/>
    </location>
</feature>
<feature type="sequence conflict" description="In Ref. 1; AAA81906." evidence="7" ref="1">
    <original>Q</original>
    <variation>K</variation>
    <location>
        <position position="821"/>
    </location>
</feature>